<proteinExistence type="inferred from homology"/>
<comment type="function">
    <text evidence="3">Odorant receptor.</text>
</comment>
<comment type="subcellular location">
    <subcellularLocation>
        <location evidence="3">Membrane</location>
        <topology evidence="3">Multi-pass membrane protein</topology>
    </subcellularLocation>
</comment>
<comment type="polymorphism">
    <text>A stop codon in the gene coding for this protein at position Arg-64 is responsible for functional diversity thus producing a pseudogene.</text>
</comment>
<comment type="similarity">
    <text evidence="2">Belongs to the G-protein coupled receptor 1 family.</text>
</comment>
<comment type="online information" name="Human Olfactory Receptor Data Exploratorium (HORDE)">
    <link uri="http://genome.weizmann.ac.il/horde/card/index/symbol:OR8J2P"/>
</comment>
<protein>
    <recommendedName>
        <fullName>Olfactory receptor 8J2</fullName>
    </recommendedName>
</protein>
<keyword id="KW-1015">Disulfide bond</keyword>
<keyword id="KW-0297">G-protein coupled receptor</keyword>
<keyword id="KW-0325">Glycoprotein</keyword>
<keyword id="KW-0472">Membrane</keyword>
<keyword id="KW-0552">Olfaction</keyword>
<keyword id="KW-0675">Receptor</keyword>
<keyword id="KW-1185">Reference proteome</keyword>
<keyword id="KW-0716">Sensory transduction</keyword>
<keyword id="KW-0807">Transducer</keyword>
<keyword id="KW-0812">Transmembrane</keyword>
<keyword id="KW-1133">Transmembrane helix</keyword>
<dbReference type="EMBL" id="AB065839">
    <property type="protein sequence ID" value="BAC06058.1"/>
    <property type="status" value="ALT_SEQ"/>
    <property type="molecule type" value="Genomic_DNA"/>
</dbReference>
<dbReference type="EMBL" id="AC022882">
    <property type="status" value="NOT_ANNOTATED_CDS"/>
    <property type="molecule type" value="Genomic_DNA"/>
</dbReference>
<dbReference type="SMR" id="Q8NGG1"/>
<dbReference type="GlyCosmos" id="Q8NGG1">
    <property type="glycosylation" value="2 sites, No reported glycans"/>
</dbReference>
<dbReference type="GlyGen" id="Q8NGG1">
    <property type="glycosylation" value="2 sites"/>
</dbReference>
<dbReference type="iPTMnet" id="Q8NGG1"/>
<dbReference type="PhosphoSitePlus" id="Q8NGG1"/>
<dbReference type="BioMuta" id="OR8J2"/>
<dbReference type="DMDM" id="166215839"/>
<dbReference type="jPOST" id="Q8NGG1"/>
<dbReference type="MassIVE" id="Q8NGG1"/>
<dbReference type="PeptideAtlas" id="Q8NGG1"/>
<dbReference type="ProteomicsDB" id="73503"/>
<dbReference type="AGR" id="HGNC:15311"/>
<dbReference type="GeneCards" id="OR8J2"/>
<dbReference type="HGNC" id="HGNC:15311">
    <property type="gene designation" value="OR8J2"/>
</dbReference>
<dbReference type="neXtProt" id="NX_Q8NGG1"/>
<dbReference type="InParanoid" id="Q8NGG1"/>
<dbReference type="OrthoDB" id="9518048at2759"/>
<dbReference type="PAN-GO" id="Q8NGG1">
    <property type="GO annotations" value="4 GO annotations based on evolutionary models"/>
</dbReference>
<dbReference type="PhylomeDB" id="Q8NGG1"/>
<dbReference type="PathwayCommons" id="Q8NGG1"/>
<dbReference type="Reactome" id="R-HSA-9752946">
    <property type="pathway name" value="Expression and translocation of olfactory receptors"/>
</dbReference>
<dbReference type="Pharos" id="Q8NGG1">
    <property type="development level" value="Tdark"/>
</dbReference>
<dbReference type="PRO" id="PR:Q8NGG1"/>
<dbReference type="Proteomes" id="UP000005640">
    <property type="component" value="Unplaced"/>
</dbReference>
<dbReference type="RNAct" id="Q8NGG1">
    <property type="molecule type" value="protein"/>
</dbReference>
<dbReference type="GO" id="GO:0016020">
    <property type="term" value="C:membrane"/>
    <property type="evidence" value="ECO:0007669"/>
    <property type="project" value="UniProtKB-SubCell"/>
</dbReference>
<dbReference type="GO" id="GO:0004930">
    <property type="term" value="F:G protein-coupled receptor activity"/>
    <property type="evidence" value="ECO:0007669"/>
    <property type="project" value="UniProtKB-KW"/>
</dbReference>
<dbReference type="GO" id="GO:0004984">
    <property type="term" value="F:olfactory receptor activity"/>
    <property type="evidence" value="ECO:0007669"/>
    <property type="project" value="InterPro"/>
</dbReference>
<dbReference type="FunFam" id="1.20.1070.10:FF:000003">
    <property type="entry name" value="Olfactory receptor"/>
    <property type="match status" value="1"/>
</dbReference>
<dbReference type="Gene3D" id="1.20.1070.10">
    <property type="entry name" value="Rhodopsin 7-helix transmembrane proteins"/>
    <property type="match status" value="1"/>
</dbReference>
<dbReference type="InterPro" id="IPR000276">
    <property type="entry name" value="GPCR_Rhodpsn"/>
</dbReference>
<dbReference type="InterPro" id="IPR017452">
    <property type="entry name" value="GPCR_Rhodpsn_7TM"/>
</dbReference>
<dbReference type="InterPro" id="IPR000725">
    <property type="entry name" value="Olfact_rcpt"/>
</dbReference>
<dbReference type="PANTHER" id="PTHR48018">
    <property type="entry name" value="OLFACTORY RECEPTOR"/>
    <property type="match status" value="1"/>
</dbReference>
<dbReference type="Pfam" id="PF13853">
    <property type="entry name" value="7tm_4"/>
    <property type="match status" value="1"/>
</dbReference>
<dbReference type="PRINTS" id="PR00237">
    <property type="entry name" value="GPCRRHODOPSN"/>
</dbReference>
<dbReference type="PRINTS" id="PR00245">
    <property type="entry name" value="OLFACTORYR"/>
</dbReference>
<dbReference type="SUPFAM" id="SSF81321">
    <property type="entry name" value="Family A G protein-coupled receptor-like"/>
    <property type="match status" value="1"/>
</dbReference>
<dbReference type="PROSITE" id="PS00237">
    <property type="entry name" value="G_PROTEIN_RECEP_F1_1"/>
    <property type="match status" value="1"/>
</dbReference>
<dbReference type="PROSITE" id="PS50262">
    <property type="entry name" value="G_PROTEIN_RECEP_F1_2"/>
    <property type="match status" value="1"/>
</dbReference>
<name>OR8J2_HUMAN</name>
<accession>Q8NGG1</accession>
<sequence>MASGNLTWVTEFILVGVSDDPELQIPLFLVFLVLYLLTVAGNLGIITLTSVDPQLQTPMYFFLRHLAIINLCNSTVVAPKMLVNFLVTKKTISYYGCAAQLGGFLVFIVAEIFTLAAMAYDRYVAIWSPLLYAVVVSPKVCRLLVSLTYLQSLITALTVSSCVFSVSYCSSNIINHFYCDDVPLLALSCSDTYIPETAVFIFSGTNLLFSMIVVLISYFNIVITILRIRSSEGRQKAFSTCASHMIAVVVFYGTLLFMYLQPRSNHSLDTDKMASVFYTLVIPVLNPLIYSLRNKNVKDALKRFLDNPCRSLKLM</sequence>
<organism>
    <name type="scientific">Homo sapiens</name>
    <name type="common">Human</name>
    <dbReference type="NCBI Taxonomy" id="9606"/>
    <lineage>
        <taxon>Eukaryota</taxon>
        <taxon>Metazoa</taxon>
        <taxon>Chordata</taxon>
        <taxon>Craniata</taxon>
        <taxon>Vertebrata</taxon>
        <taxon>Euteleostomi</taxon>
        <taxon>Mammalia</taxon>
        <taxon>Eutheria</taxon>
        <taxon>Euarchontoglires</taxon>
        <taxon>Primates</taxon>
        <taxon>Haplorrhini</taxon>
        <taxon>Catarrhini</taxon>
        <taxon>Hominidae</taxon>
        <taxon>Homo</taxon>
    </lineage>
</organism>
<gene>
    <name type="primary">OR8J2</name>
    <name type="synonym">OR8J2P</name>
</gene>
<reference key="1">
    <citation type="journal article" date="2006" name="Nature">
        <title>Human chromosome 11 DNA sequence and analysis including novel gene identification.</title>
        <authorList>
            <person name="Taylor T.D."/>
            <person name="Noguchi H."/>
            <person name="Totoki Y."/>
            <person name="Toyoda A."/>
            <person name="Kuroki Y."/>
            <person name="Dewar K."/>
            <person name="Lloyd C."/>
            <person name="Itoh T."/>
            <person name="Takeda T."/>
            <person name="Kim D.-W."/>
            <person name="She X."/>
            <person name="Barlow K.F."/>
            <person name="Bloom T."/>
            <person name="Bruford E."/>
            <person name="Chang J.L."/>
            <person name="Cuomo C.A."/>
            <person name="Eichler E."/>
            <person name="FitzGerald M.G."/>
            <person name="Jaffe D.B."/>
            <person name="LaButti K."/>
            <person name="Nicol R."/>
            <person name="Park H.-S."/>
            <person name="Seaman C."/>
            <person name="Sougnez C."/>
            <person name="Yang X."/>
            <person name="Zimmer A.R."/>
            <person name="Zody M.C."/>
            <person name="Birren B.W."/>
            <person name="Nusbaum C."/>
            <person name="Fujiyama A."/>
            <person name="Hattori M."/>
            <person name="Rogers J."/>
            <person name="Lander E.S."/>
            <person name="Sakaki Y."/>
        </authorList>
    </citation>
    <scope>NUCLEOTIDE SEQUENCE [LARGE SCALE GENOMIC DNA]</scope>
</reference>
<reference key="2">
    <citation type="submission" date="2001-07" db="EMBL/GenBank/DDBJ databases">
        <title>Genome-wide discovery and analysis of human seven transmembrane helix receptor genes.</title>
        <authorList>
            <person name="Suwa M."/>
            <person name="Sato T."/>
            <person name="Okouchi I."/>
            <person name="Arita M."/>
            <person name="Futami K."/>
            <person name="Matsumoto S."/>
            <person name="Tsutsumi S."/>
            <person name="Aburatani H."/>
            <person name="Asai K."/>
            <person name="Akiyama Y."/>
        </authorList>
    </citation>
    <scope>NUCLEOTIDE SEQUENCE [GENOMIC DNA] OF 15-315</scope>
</reference>
<reference key="3">
    <citation type="journal article" date="2003" name="Nat. Genet.">
        <title>Different noses for different people.</title>
        <authorList>
            <person name="Menashe I."/>
            <person name="Man O."/>
            <person name="Lancet D."/>
            <person name="Gilad Y."/>
        </authorList>
    </citation>
    <scope>POLYMORPHISM</scope>
</reference>
<feature type="chain" id="PRO_0000314023" description="Olfactory receptor 8J2">
    <location>
        <begin position="1"/>
        <end position="315"/>
    </location>
</feature>
<feature type="topological domain" description="Extracellular" evidence="1">
    <location>
        <begin position="1"/>
        <end position="24"/>
    </location>
</feature>
<feature type="transmembrane region" description="Helical; Name=1" evidence="1">
    <location>
        <begin position="25"/>
        <end position="45"/>
    </location>
</feature>
<feature type="topological domain" description="Cytoplasmic" evidence="1">
    <location>
        <begin position="46"/>
        <end position="57"/>
    </location>
</feature>
<feature type="transmembrane region" description="Helical; Name=2" evidence="1">
    <location>
        <begin position="58"/>
        <end position="78"/>
    </location>
</feature>
<feature type="topological domain" description="Extracellular" evidence="1">
    <location>
        <begin position="79"/>
        <end position="97"/>
    </location>
</feature>
<feature type="transmembrane region" description="Helical; Name=3" evidence="1">
    <location>
        <begin position="98"/>
        <end position="118"/>
    </location>
</feature>
<feature type="topological domain" description="Cytoplasmic" evidence="1">
    <location>
        <begin position="119"/>
        <end position="143"/>
    </location>
</feature>
<feature type="transmembrane region" description="Helical; Name=4" evidence="1">
    <location>
        <begin position="144"/>
        <end position="164"/>
    </location>
</feature>
<feature type="topological domain" description="Extracellular" evidence="1">
    <location>
        <begin position="165"/>
        <end position="205"/>
    </location>
</feature>
<feature type="transmembrane region" description="Helical; Name=5" evidence="1">
    <location>
        <begin position="206"/>
        <end position="226"/>
    </location>
</feature>
<feature type="topological domain" description="Cytoplasmic" evidence="1">
    <location>
        <begin position="227"/>
        <end position="239"/>
    </location>
</feature>
<feature type="transmembrane region" description="Helical; Name=6" evidence="1">
    <location>
        <begin position="240"/>
        <end position="260"/>
    </location>
</feature>
<feature type="topological domain" description="Extracellular" evidence="1">
    <location>
        <begin position="261"/>
        <end position="271"/>
    </location>
</feature>
<feature type="transmembrane region" description="Helical; Name=7" evidence="1">
    <location>
        <begin position="272"/>
        <end position="292"/>
    </location>
</feature>
<feature type="topological domain" description="Cytoplasmic" evidence="1">
    <location>
        <begin position="293"/>
        <end position="315"/>
    </location>
</feature>
<feature type="glycosylation site" description="N-linked (GlcNAc...) asparagine" evidence="1">
    <location>
        <position position="5"/>
    </location>
</feature>
<feature type="glycosylation site" description="N-linked (GlcNAc...) asparagine" evidence="1">
    <location>
        <position position="265"/>
    </location>
</feature>
<feature type="disulfide bond" evidence="2">
    <location>
        <begin position="97"/>
        <end position="179"/>
    </location>
</feature>
<evidence type="ECO:0000255" key="1"/>
<evidence type="ECO:0000255" key="2">
    <source>
        <dbReference type="PROSITE-ProRule" id="PRU00521"/>
    </source>
</evidence>
<evidence type="ECO:0000305" key="3"/>